<gene>
    <name evidence="1" type="primary">uppP</name>
    <name type="synonym">bacA</name>
    <name type="synonym">upk</name>
    <name type="ordered locus">plu3973</name>
</gene>
<feature type="chain" id="PRO_0000151175" description="Undecaprenyl-diphosphatase">
    <location>
        <begin position="1"/>
        <end position="272"/>
    </location>
</feature>
<feature type="transmembrane region" description="Helical" evidence="1">
    <location>
        <begin position="22"/>
        <end position="42"/>
    </location>
</feature>
<feature type="transmembrane region" description="Helical" evidence="1">
    <location>
        <begin position="45"/>
        <end position="65"/>
    </location>
</feature>
<feature type="transmembrane region" description="Helical" evidence="1">
    <location>
        <begin position="92"/>
        <end position="112"/>
    </location>
</feature>
<feature type="transmembrane region" description="Helical" evidence="1">
    <location>
        <begin position="118"/>
        <end position="138"/>
    </location>
</feature>
<feature type="transmembrane region" description="Helical" evidence="1">
    <location>
        <begin position="189"/>
        <end position="209"/>
    </location>
</feature>
<feature type="transmembrane region" description="Helical" evidence="1">
    <location>
        <begin position="228"/>
        <end position="248"/>
    </location>
</feature>
<feature type="transmembrane region" description="Helical" evidence="1">
    <location>
        <begin position="251"/>
        <end position="271"/>
    </location>
</feature>
<organism>
    <name type="scientific">Photorhabdus laumondii subsp. laumondii (strain DSM 15139 / CIP 105565 / TT01)</name>
    <name type="common">Photorhabdus luminescens subsp. laumondii</name>
    <dbReference type="NCBI Taxonomy" id="243265"/>
    <lineage>
        <taxon>Bacteria</taxon>
        <taxon>Pseudomonadati</taxon>
        <taxon>Pseudomonadota</taxon>
        <taxon>Gammaproteobacteria</taxon>
        <taxon>Enterobacterales</taxon>
        <taxon>Morganellaceae</taxon>
        <taxon>Photorhabdus</taxon>
    </lineage>
</organism>
<reference key="1">
    <citation type="journal article" date="2003" name="Nat. Biotechnol.">
        <title>The genome sequence of the entomopathogenic bacterium Photorhabdus luminescens.</title>
        <authorList>
            <person name="Duchaud E."/>
            <person name="Rusniok C."/>
            <person name="Frangeul L."/>
            <person name="Buchrieser C."/>
            <person name="Givaudan A."/>
            <person name="Taourit S."/>
            <person name="Bocs S."/>
            <person name="Boursaux-Eude C."/>
            <person name="Chandler M."/>
            <person name="Charles J.-F."/>
            <person name="Dassa E."/>
            <person name="Derose R."/>
            <person name="Derzelle S."/>
            <person name="Freyssinet G."/>
            <person name="Gaudriault S."/>
            <person name="Medigue C."/>
            <person name="Lanois A."/>
            <person name="Powell K."/>
            <person name="Siguier P."/>
            <person name="Vincent R."/>
            <person name="Wingate V."/>
            <person name="Zouine M."/>
            <person name="Glaser P."/>
            <person name="Boemare N."/>
            <person name="Danchin A."/>
            <person name="Kunst F."/>
        </authorList>
    </citation>
    <scope>NUCLEOTIDE SEQUENCE [LARGE SCALE GENOMIC DNA]</scope>
    <source>
        <strain>DSM 15139 / CIP 105565 / TT01</strain>
    </source>
</reference>
<comment type="function">
    <text evidence="1">Catalyzes the dephosphorylation of undecaprenyl diphosphate (UPP). Confers resistance to bacitracin.</text>
</comment>
<comment type="catalytic activity">
    <reaction evidence="1">
        <text>di-trans,octa-cis-undecaprenyl diphosphate + H2O = di-trans,octa-cis-undecaprenyl phosphate + phosphate + H(+)</text>
        <dbReference type="Rhea" id="RHEA:28094"/>
        <dbReference type="ChEBI" id="CHEBI:15377"/>
        <dbReference type="ChEBI" id="CHEBI:15378"/>
        <dbReference type="ChEBI" id="CHEBI:43474"/>
        <dbReference type="ChEBI" id="CHEBI:58405"/>
        <dbReference type="ChEBI" id="CHEBI:60392"/>
        <dbReference type="EC" id="3.6.1.27"/>
    </reaction>
</comment>
<comment type="subcellular location">
    <subcellularLocation>
        <location evidence="1">Cell inner membrane</location>
        <topology evidence="1">Multi-pass membrane protein</topology>
    </subcellularLocation>
</comment>
<comment type="miscellaneous">
    <text>Bacitracin is thought to be involved in the inhibition of peptidoglycan synthesis by sequestering undecaprenyl diphosphate, thereby reducing the pool of lipid carrier available.</text>
</comment>
<comment type="similarity">
    <text evidence="1">Belongs to the UppP family.</text>
</comment>
<keyword id="KW-0046">Antibiotic resistance</keyword>
<keyword id="KW-0997">Cell inner membrane</keyword>
<keyword id="KW-1003">Cell membrane</keyword>
<keyword id="KW-0133">Cell shape</keyword>
<keyword id="KW-0961">Cell wall biogenesis/degradation</keyword>
<keyword id="KW-0378">Hydrolase</keyword>
<keyword id="KW-0472">Membrane</keyword>
<keyword id="KW-0573">Peptidoglycan synthesis</keyword>
<keyword id="KW-1185">Reference proteome</keyword>
<keyword id="KW-0812">Transmembrane</keyword>
<keyword id="KW-1133">Transmembrane helix</keyword>
<name>UPPP_PHOLL</name>
<proteinExistence type="inferred from homology"/>
<accession>Q7N0B9</accession>
<evidence type="ECO:0000255" key="1">
    <source>
        <dbReference type="HAMAP-Rule" id="MF_01006"/>
    </source>
</evidence>
<sequence length="272" mass="29619">MTDLSTLFHAAILGVVEGLTEFLPVSSTGHMIIVGHMLGFTGDKAETFEVIIQLGSILAVVVVFWRRLFGLIGIHFGEVPHEGKTNGKLKLSHIILAMLPAVTLGLMFHDVIKSLFNPQSVMYALVIGGVLLITAEILKPKTPKAEGLDDITYRQAFMIGCFQCLALWPGFSRSGATISGGMLMGVNRYTASEFSFILAVPMMMGASGLDLYKSLHFLSASDIPMFAVGFVTAFVVALVAIKTFLALIKRISFIPFAIYRFIVAAAVYWVFM</sequence>
<protein>
    <recommendedName>
        <fullName evidence="1">Undecaprenyl-diphosphatase</fullName>
        <ecNumber evidence="1">3.6.1.27</ecNumber>
    </recommendedName>
    <alternativeName>
        <fullName evidence="1">Bacitracin resistance protein</fullName>
    </alternativeName>
    <alternativeName>
        <fullName evidence="1">Undecaprenyl pyrophosphate phosphatase</fullName>
    </alternativeName>
</protein>
<dbReference type="EC" id="3.6.1.27" evidence="1"/>
<dbReference type="EMBL" id="BX571872">
    <property type="protein sequence ID" value="CAE16345.1"/>
    <property type="molecule type" value="Genomic_DNA"/>
</dbReference>
<dbReference type="RefSeq" id="WP_011148106.1">
    <property type="nucleotide sequence ID" value="NC_005126.1"/>
</dbReference>
<dbReference type="SMR" id="Q7N0B9"/>
<dbReference type="STRING" id="243265.plu3973"/>
<dbReference type="GeneID" id="48850199"/>
<dbReference type="KEGG" id="plu:plu3973"/>
<dbReference type="eggNOG" id="COG1968">
    <property type="taxonomic scope" value="Bacteria"/>
</dbReference>
<dbReference type="HOGENOM" id="CLU_060296_2_0_6"/>
<dbReference type="OrthoDB" id="9808289at2"/>
<dbReference type="Proteomes" id="UP000002514">
    <property type="component" value="Chromosome"/>
</dbReference>
<dbReference type="GO" id="GO:0005886">
    <property type="term" value="C:plasma membrane"/>
    <property type="evidence" value="ECO:0007669"/>
    <property type="project" value="UniProtKB-SubCell"/>
</dbReference>
<dbReference type="GO" id="GO:0050380">
    <property type="term" value="F:undecaprenyl-diphosphatase activity"/>
    <property type="evidence" value="ECO:0007669"/>
    <property type="project" value="UniProtKB-UniRule"/>
</dbReference>
<dbReference type="GO" id="GO:0071555">
    <property type="term" value="P:cell wall organization"/>
    <property type="evidence" value="ECO:0007669"/>
    <property type="project" value="UniProtKB-KW"/>
</dbReference>
<dbReference type="GO" id="GO:0009252">
    <property type="term" value="P:peptidoglycan biosynthetic process"/>
    <property type="evidence" value="ECO:0007669"/>
    <property type="project" value="UniProtKB-KW"/>
</dbReference>
<dbReference type="GO" id="GO:0008360">
    <property type="term" value="P:regulation of cell shape"/>
    <property type="evidence" value="ECO:0007669"/>
    <property type="project" value="UniProtKB-KW"/>
</dbReference>
<dbReference type="GO" id="GO:0046677">
    <property type="term" value="P:response to antibiotic"/>
    <property type="evidence" value="ECO:0007669"/>
    <property type="project" value="UniProtKB-UniRule"/>
</dbReference>
<dbReference type="HAMAP" id="MF_01006">
    <property type="entry name" value="Undec_diphosphatase"/>
    <property type="match status" value="1"/>
</dbReference>
<dbReference type="InterPro" id="IPR003824">
    <property type="entry name" value="UppP"/>
</dbReference>
<dbReference type="NCBIfam" id="NF001388">
    <property type="entry name" value="PRK00281.1-1"/>
    <property type="match status" value="1"/>
</dbReference>
<dbReference type="NCBIfam" id="NF001389">
    <property type="entry name" value="PRK00281.1-2"/>
    <property type="match status" value="1"/>
</dbReference>
<dbReference type="NCBIfam" id="NF001390">
    <property type="entry name" value="PRK00281.1-4"/>
    <property type="match status" value="1"/>
</dbReference>
<dbReference type="NCBIfam" id="TIGR00753">
    <property type="entry name" value="undec_PP_bacA"/>
    <property type="match status" value="1"/>
</dbReference>
<dbReference type="PANTHER" id="PTHR30622">
    <property type="entry name" value="UNDECAPRENYL-DIPHOSPHATASE"/>
    <property type="match status" value="1"/>
</dbReference>
<dbReference type="PANTHER" id="PTHR30622:SF3">
    <property type="entry name" value="UNDECAPRENYL-DIPHOSPHATASE"/>
    <property type="match status" value="1"/>
</dbReference>
<dbReference type="Pfam" id="PF02673">
    <property type="entry name" value="BacA"/>
    <property type="match status" value="1"/>
</dbReference>